<keyword id="KW-0030">Aminoacyl-tRNA synthetase</keyword>
<keyword id="KW-0067">ATP-binding</keyword>
<keyword id="KW-0963">Cytoplasm</keyword>
<keyword id="KW-0436">Ligase</keyword>
<keyword id="KW-0547">Nucleotide-binding</keyword>
<keyword id="KW-0648">Protein biosynthesis</keyword>
<keyword id="KW-1185">Reference proteome</keyword>
<accession>C3PH25</accession>
<feature type="chain" id="PRO_1000185494" description="Proline--tRNA ligase">
    <location>
        <begin position="1"/>
        <end position="589"/>
    </location>
</feature>
<gene>
    <name evidence="1" type="primary">proS</name>
    <name type="ordered locus">cauri_1536</name>
</gene>
<comment type="function">
    <text evidence="1">Catalyzes the attachment of proline to tRNA(Pro) in a two-step reaction: proline is first activated by ATP to form Pro-AMP and then transferred to the acceptor end of tRNA(Pro). As ProRS can inadvertently accommodate and process non-cognate amino acids such as alanine and cysteine, to avoid such errors it has two additional distinct editing activities against alanine. One activity is designated as 'pretransfer' editing and involves the tRNA(Pro)-independent hydrolysis of activated Ala-AMP. The other activity is designated 'posttransfer' editing and involves deacylation of mischarged Ala-tRNA(Pro). The misacylated Cys-tRNA(Pro) is not edited by ProRS.</text>
</comment>
<comment type="catalytic activity">
    <reaction evidence="1">
        <text>tRNA(Pro) + L-proline + ATP = L-prolyl-tRNA(Pro) + AMP + diphosphate</text>
        <dbReference type="Rhea" id="RHEA:14305"/>
        <dbReference type="Rhea" id="RHEA-COMP:9700"/>
        <dbReference type="Rhea" id="RHEA-COMP:9702"/>
        <dbReference type="ChEBI" id="CHEBI:30616"/>
        <dbReference type="ChEBI" id="CHEBI:33019"/>
        <dbReference type="ChEBI" id="CHEBI:60039"/>
        <dbReference type="ChEBI" id="CHEBI:78442"/>
        <dbReference type="ChEBI" id="CHEBI:78532"/>
        <dbReference type="ChEBI" id="CHEBI:456215"/>
        <dbReference type="EC" id="6.1.1.15"/>
    </reaction>
</comment>
<comment type="subunit">
    <text evidence="1">Homodimer.</text>
</comment>
<comment type="subcellular location">
    <subcellularLocation>
        <location evidence="1">Cytoplasm</location>
    </subcellularLocation>
</comment>
<comment type="domain">
    <text evidence="1">Consists of three domains: the N-terminal catalytic domain, the editing domain and the C-terminal anticodon-binding domain.</text>
</comment>
<comment type="similarity">
    <text evidence="1">Belongs to the class-II aminoacyl-tRNA synthetase family. ProS type 1 subfamily.</text>
</comment>
<organism>
    <name type="scientific">Corynebacterium aurimucosum (strain ATCC 700975 / DSM 44827 / CIP 107346 / CN-1)</name>
    <name type="common">Corynebacterium nigricans</name>
    <dbReference type="NCBI Taxonomy" id="548476"/>
    <lineage>
        <taxon>Bacteria</taxon>
        <taxon>Bacillati</taxon>
        <taxon>Actinomycetota</taxon>
        <taxon>Actinomycetes</taxon>
        <taxon>Mycobacteriales</taxon>
        <taxon>Corynebacteriaceae</taxon>
        <taxon>Corynebacterium</taxon>
    </lineage>
</organism>
<dbReference type="EC" id="6.1.1.15" evidence="1"/>
<dbReference type="EMBL" id="CP001601">
    <property type="protein sequence ID" value="ACP33129.1"/>
    <property type="molecule type" value="Genomic_DNA"/>
</dbReference>
<dbReference type="RefSeq" id="WP_010190344.1">
    <property type="nucleotide sequence ID" value="NC_012590.1"/>
</dbReference>
<dbReference type="SMR" id="C3PH25"/>
<dbReference type="STRING" id="548476.cauri_1536"/>
<dbReference type="GeneID" id="31924166"/>
<dbReference type="KEGG" id="car:cauri_1536"/>
<dbReference type="eggNOG" id="COG0442">
    <property type="taxonomic scope" value="Bacteria"/>
</dbReference>
<dbReference type="HOGENOM" id="CLU_016739_0_0_11"/>
<dbReference type="OrthoDB" id="9809052at2"/>
<dbReference type="Proteomes" id="UP000002077">
    <property type="component" value="Chromosome"/>
</dbReference>
<dbReference type="GO" id="GO:0005829">
    <property type="term" value="C:cytosol"/>
    <property type="evidence" value="ECO:0007669"/>
    <property type="project" value="TreeGrafter"/>
</dbReference>
<dbReference type="GO" id="GO:0002161">
    <property type="term" value="F:aminoacyl-tRNA deacylase activity"/>
    <property type="evidence" value="ECO:0007669"/>
    <property type="project" value="InterPro"/>
</dbReference>
<dbReference type="GO" id="GO:0005524">
    <property type="term" value="F:ATP binding"/>
    <property type="evidence" value="ECO:0007669"/>
    <property type="project" value="UniProtKB-UniRule"/>
</dbReference>
<dbReference type="GO" id="GO:0004827">
    <property type="term" value="F:proline-tRNA ligase activity"/>
    <property type="evidence" value="ECO:0007669"/>
    <property type="project" value="UniProtKB-UniRule"/>
</dbReference>
<dbReference type="GO" id="GO:0006433">
    <property type="term" value="P:prolyl-tRNA aminoacylation"/>
    <property type="evidence" value="ECO:0007669"/>
    <property type="project" value="UniProtKB-UniRule"/>
</dbReference>
<dbReference type="CDD" id="cd00861">
    <property type="entry name" value="ProRS_anticodon_short"/>
    <property type="match status" value="1"/>
</dbReference>
<dbReference type="CDD" id="cd00779">
    <property type="entry name" value="ProRS_core_prok"/>
    <property type="match status" value="1"/>
</dbReference>
<dbReference type="FunFam" id="3.30.930.10:FF:000065">
    <property type="entry name" value="Proline--tRNA ligase"/>
    <property type="match status" value="1"/>
</dbReference>
<dbReference type="FunFam" id="3.30.930.10:FF:000070">
    <property type="entry name" value="Proline--tRNA ligase"/>
    <property type="match status" value="1"/>
</dbReference>
<dbReference type="Gene3D" id="3.40.50.800">
    <property type="entry name" value="Anticodon-binding domain"/>
    <property type="match status" value="1"/>
</dbReference>
<dbReference type="Gene3D" id="3.30.930.10">
    <property type="entry name" value="Bira Bifunctional Protein, Domain 2"/>
    <property type="match status" value="2"/>
</dbReference>
<dbReference type="HAMAP" id="MF_01569">
    <property type="entry name" value="Pro_tRNA_synth_type1"/>
    <property type="match status" value="1"/>
</dbReference>
<dbReference type="InterPro" id="IPR002314">
    <property type="entry name" value="aa-tRNA-synt_IIb"/>
</dbReference>
<dbReference type="InterPro" id="IPR006195">
    <property type="entry name" value="aa-tRNA-synth_II"/>
</dbReference>
<dbReference type="InterPro" id="IPR045864">
    <property type="entry name" value="aa-tRNA-synth_II/BPL/LPL"/>
</dbReference>
<dbReference type="InterPro" id="IPR004154">
    <property type="entry name" value="Anticodon-bd"/>
</dbReference>
<dbReference type="InterPro" id="IPR036621">
    <property type="entry name" value="Anticodon-bd_dom_sf"/>
</dbReference>
<dbReference type="InterPro" id="IPR002316">
    <property type="entry name" value="Pro-tRNA-ligase_IIa"/>
</dbReference>
<dbReference type="InterPro" id="IPR004500">
    <property type="entry name" value="Pro-tRNA-synth_IIa_bac-type"/>
</dbReference>
<dbReference type="InterPro" id="IPR023717">
    <property type="entry name" value="Pro-tRNA-Synthase_IIa_type1"/>
</dbReference>
<dbReference type="InterPro" id="IPR050062">
    <property type="entry name" value="Pro-tRNA_synthetase"/>
</dbReference>
<dbReference type="InterPro" id="IPR044140">
    <property type="entry name" value="ProRS_anticodon_short"/>
</dbReference>
<dbReference type="InterPro" id="IPR033730">
    <property type="entry name" value="ProRS_core_prok"/>
</dbReference>
<dbReference type="InterPro" id="IPR036754">
    <property type="entry name" value="YbaK/aa-tRNA-synt-asso_dom_sf"/>
</dbReference>
<dbReference type="InterPro" id="IPR007214">
    <property type="entry name" value="YbaK/aa-tRNA-synth-assoc-dom"/>
</dbReference>
<dbReference type="NCBIfam" id="NF006625">
    <property type="entry name" value="PRK09194.1"/>
    <property type="match status" value="1"/>
</dbReference>
<dbReference type="NCBIfam" id="TIGR00409">
    <property type="entry name" value="proS_fam_II"/>
    <property type="match status" value="1"/>
</dbReference>
<dbReference type="PANTHER" id="PTHR42753">
    <property type="entry name" value="MITOCHONDRIAL RIBOSOME PROTEIN L39/PROLYL-TRNA LIGASE FAMILY MEMBER"/>
    <property type="match status" value="1"/>
</dbReference>
<dbReference type="PANTHER" id="PTHR42753:SF2">
    <property type="entry name" value="PROLINE--TRNA LIGASE"/>
    <property type="match status" value="1"/>
</dbReference>
<dbReference type="Pfam" id="PF03129">
    <property type="entry name" value="HGTP_anticodon"/>
    <property type="match status" value="1"/>
</dbReference>
<dbReference type="Pfam" id="PF00587">
    <property type="entry name" value="tRNA-synt_2b"/>
    <property type="match status" value="1"/>
</dbReference>
<dbReference type="Pfam" id="PF04073">
    <property type="entry name" value="tRNA_edit"/>
    <property type="match status" value="1"/>
</dbReference>
<dbReference type="PRINTS" id="PR01046">
    <property type="entry name" value="TRNASYNTHPRO"/>
</dbReference>
<dbReference type="SUPFAM" id="SSF52954">
    <property type="entry name" value="Class II aaRS ABD-related"/>
    <property type="match status" value="1"/>
</dbReference>
<dbReference type="SUPFAM" id="SSF55681">
    <property type="entry name" value="Class II aaRS and biotin synthetases"/>
    <property type="match status" value="1"/>
</dbReference>
<dbReference type="SUPFAM" id="SSF55826">
    <property type="entry name" value="YbaK/ProRS associated domain"/>
    <property type="match status" value="1"/>
</dbReference>
<dbReference type="PROSITE" id="PS50862">
    <property type="entry name" value="AA_TRNA_LIGASE_II"/>
    <property type="match status" value="1"/>
</dbReference>
<proteinExistence type="inferred from homology"/>
<evidence type="ECO:0000255" key="1">
    <source>
        <dbReference type="HAMAP-Rule" id="MF_01569"/>
    </source>
</evidence>
<reference key="1">
    <citation type="journal article" date="2010" name="BMC Genomics">
        <title>Complete genome sequence and lifestyle of black-pigmented Corynebacterium aurimucosum ATCC 700975 (formerly C. nigricans CN-1) isolated from a vaginal swab of a woman with spontaneous abortion.</title>
        <authorList>
            <person name="Trost E."/>
            <person name="Gotker S."/>
            <person name="Schneider J."/>
            <person name="Schneiker-Bekel S."/>
            <person name="Szczepanowski R."/>
            <person name="Tilker A."/>
            <person name="Viehoever P."/>
            <person name="Arnold W."/>
            <person name="Bekel T."/>
            <person name="Blom J."/>
            <person name="Gartemann K.H."/>
            <person name="Linke B."/>
            <person name="Goesmann A."/>
            <person name="Puhler A."/>
            <person name="Shukla S.K."/>
            <person name="Tauch A."/>
        </authorList>
    </citation>
    <scope>NUCLEOTIDE SEQUENCE [LARGE SCALE GENOMIC DNA]</scope>
    <source>
        <strain>ATCC 700975 / DSM 44827 / CIP 107346 / CN-1</strain>
    </source>
</reference>
<sequence length="589" mass="65286">MITRLSELFLRTLREDPADAEVPSHKLLVRAGYVRRVAPGVYTWLPLGLRAMRKIEDVIRQEMNAIGGQEMLFPALLPREPYEESNRWTEYGDNLFRLKDRKGADMLLGPTHEEMFTTAVKDMYSSYKDFPVTLYQIQTKYRDEERPRAGVLRGREFTMKDSYSFDMTDEGLDESYARHRKAYQNIFDRLEIDYAICKATSGAMGGSASEEFLAVSEVGEDTFVRATEGEYAANVEAVVTQAPEEISFEGLPEAQEHETPKSETIESLVEWAKGAGITVDGREVTAADTLKCMMIKVAAPAATEEEKEWELAAVLIPGDRALDEKRLEASLEPAEFELAGEGDFKKNSFLVKGYVGPRVLNAHDVKVYADPRVVSGTSWITGADAPQRHVVGLVAGRDFTVDEFIEAAEVKEGDPAPNGQGTLTLERGIELGHIFQLGRKYTEAFDVQILDENGKRAVPTMGSYGIGVTRMLAVLAEQRHDEKGLNWPVAVAPYQVHVAVANKDAAALEAGQKLVEDLDRAGIEVLYDDRPKVSPGVKFKDAELLGMPFIAILGRAFADGIIELRIRGGETREVPADSIVDTLTELIRG</sequence>
<name>SYP_CORA7</name>
<protein>
    <recommendedName>
        <fullName evidence="1">Proline--tRNA ligase</fullName>
        <ecNumber evidence="1">6.1.1.15</ecNumber>
    </recommendedName>
    <alternativeName>
        <fullName evidence="1">Prolyl-tRNA synthetase</fullName>
        <shortName evidence="1">ProRS</shortName>
    </alternativeName>
</protein>